<comment type="function">
    <text evidence="1">Produces ATP from ADP in the presence of a proton gradient across the membrane. The catalytic sites are hosted primarily by the beta subunits.</text>
</comment>
<comment type="catalytic activity">
    <reaction evidence="1">
        <text>ATP + H2O + 4 H(+)(in) = ADP + phosphate + 5 H(+)(out)</text>
        <dbReference type="Rhea" id="RHEA:57720"/>
        <dbReference type="ChEBI" id="CHEBI:15377"/>
        <dbReference type="ChEBI" id="CHEBI:15378"/>
        <dbReference type="ChEBI" id="CHEBI:30616"/>
        <dbReference type="ChEBI" id="CHEBI:43474"/>
        <dbReference type="ChEBI" id="CHEBI:456216"/>
        <dbReference type="EC" id="7.1.2.2"/>
    </reaction>
</comment>
<comment type="subunit">
    <text evidence="1">F-type ATPases have 2 components, CF(1) - the catalytic core - and CF(0) - the membrane proton channel. CF(1) has five subunits: alpha(3), beta(3), gamma(1), delta(1), epsilon(1). CF(0) has three main subunits: a(1), b(2) and c(9-12). The alpha and beta chains form an alternating ring which encloses part of the gamma chain. CF(1) is attached to CF(0) by a central stalk formed by the gamma and epsilon chains, while a peripheral stalk is formed by the delta and b chains.</text>
</comment>
<comment type="subcellular location">
    <subcellularLocation>
        <location evidence="1">Cell membrane</location>
        <topology evidence="1">Peripheral membrane protein</topology>
    </subcellularLocation>
</comment>
<comment type="similarity">
    <text evidence="1">Belongs to the ATPase alpha/beta chains family.</text>
</comment>
<comment type="sequence caution" evidence="2">
    <conflict type="erroneous initiation">
        <sequence resource="EMBL-CDS" id="CAI55427"/>
    </conflict>
</comment>
<protein>
    <recommendedName>
        <fullName evidence="1">ATP synthase subunit beta</fullName>
        <ecNumber evidence="1">7.1.2.2</ecNumber>
    </recommendedName>
    <alternativeName>
        <fullName evidence="1">ATP synthase F1 sector subunit beta</fullName>
    </alternativeName>
    <alternativeName>
        <fullName evidence="1">F-ATPase subunit beta</fullName>
    </alternativeName>
</protein>
<name>ATPB_LATSS</name>
<feature type="chain" id="PRO_0000254282" description="ATP synthase subunit beta">
    <location>
        <begin position="1"/>
        <end position="476"/>
    </location>
</feature>
<feature type="binding site" evidence="1">
    <location>
        <begin position="153"/>
        <end position="160"/>
    </location>
    <ligand>
        <name>ATP</name>
        <dbReference type="ChEBI" id="CHEBI:30616"/>
    </ligand>
</feature>
<proteinExistence type="inferred from homology"/>
<accession>Q38WK5</accession>
<gene>
    <name evidence="1" type="primary">atpD</name>
    <name type="ordered locus">LCA_1126</name>
</gene>
<organism>
    <name type="scientific">Latilactobacillus sakei subsp. sakei (strain 23K)</name>
    <name type="common">Lactobacillus sakei subsp. sakei</name>
    <dbReference type="NCBI Taxonomy" id="314315"/>
    <lineage>
        <taxon>Bacteria</taxon>
        <taxon>Bacillati</taxon>
        <taxon>Bacillota</taxon>
        <taxon>Bacilli</taxon>
        <taxon>Lactobacillales</taxon>
        <taxon>Lactobacillaceae</taxon>
        <taxon>Latilactobacillus</taxon>
    </lineage>
</organism>
<dbReference type="EC" id="7.1.2.2" evidence="1"/>
<dbReference type="EMBL" id="CR936503">
    <property type="protein sequence ID" value="CAI55427.1"/>
    <property type="status" value="ALT_INIT"/>
    <property type="molecule type" value="Genomic_DNA"/>
</dbReference>
<dbReference type="RefSeq" id="WP_016265262.1">
    <property type="nucleotide sequence ID" value="NC_007576.1"/>
</dbReference>
<dbReference type="SMR" id="Q38WK5"/>
<dbReference type="STRING" id="314315.LCA_1126"/>
<dbReference type="GeneID" id="57133983"/>
<dbReference type="KEGG" id="lsa:LCA_1126"/>
<dbReference type="eggNOG" id="COG0055">
    <property type="taxonomic scope" value="Bacteria"/>
</dbReference>
<dbReference type="HOGENOM" id="CLU_022398_0_2_9"/>
<dbReference type="OrthoDB" id="9801639at2"/>
<dbReference type="Proteomes" id="UP000002707">
    <property type="component" value="Chromosome"/>
</dbReference>
<dbReference type="GO" id="GO:0005886">
    <property type="term" value="C:plasma membrane"/>
    <property type="evidence" value="ECO:0007669"/>
    <property type="project" value="UniProtKB-SubCell"/>
</dbReference>
<dbReference type="GO" id="GO:0045259">
    <property type="term" value="C:proton-transporting ATP synthase complex"/>
    <property type="evidence" value="ECO:0007669"/>
    <property type="project" value="UniProtKB-KW"/>
</dbReference>
<dbReference type="GO" id="GO:0005524">
    <property type="term" value="F:ATP binding"/>
    <property type="evidence" value="ECO:0007669"/>
    <property type="project" value="UniProtKB-UniRule"/>
</dbReference>
<dbReference type="GO" id="GO:0016887">
    <property type="term" value="F:ATP hydrolysis activity"/>
    <property type="evidence" value="ECO:0007669"/>
    <property type="project" value="InterPro"/>
</dbReference>
<dbReference type="GO" id="GO:0046933">
    <property type="term" value="F:proton-transporting ATP synthase activity, rotational mechanism"/>
    <property type="evidence" value="ECO:0007669"/>
    <property type="project" value="UniProtKB-UniRule"/>
</dbReference>
<dbReference type="CDD" id="cd18110">
    <property type="entry name" value="ATP-synt_F1_beta_C"/>
    <property type="match status" value="1"/>
</dbReference>
<dbReference type="CDD" id="cd18115">
    <property type="entry name" value="ATP-synt_F1_beta_N"/>
    <property type="match status" value="1"/>
</dbReference>
<dbReference type="CDD" id="cd01133">
    <property type="entry name" value="F1-ATPase_beta_CD"/>
    <property type="match status" value="1"/>
</dbReference>
<dbReference type="FunFam" id="1.10.1140.10:FF:000001">
    <property type="entry name" value="ATP synthase subunit beta"/>
    <property type="match status" value="1"/>
</dbReference>
<dbReference type="FunFam" id="3.40.50.300:FF:000004">
    <property type="entry name" value="ATP synthase subunit beta"/>
    <property type="match status" value="1"/>
</dbReference>
<dbReference type="Gene3D" id="2.40.10.170">
    <property type="match status" value="1"/>
</dbReference>
<dbReference type="Gene3D" id="1.10.1140.10">
    <property type="entry name" value="Bovine Mitochondrial F1-atpase, Atp Synthase Beta Chain, Chain D, domain 3"/>
    <property type="match status" value="1"/>
</dbReference>
<dbReference type="Gene3D" id="3.40.50.300">
    <property type="entry name" value="P-loop containing nucleotide triphosphate hydrolases"/>
    <property type="match status" value="1"/>
</dbReference>
<dbReference type="HAMAP" id="MF_01347">
    <property type="entry name" value="ATP_synth_beta_bact"/>
    <property type="match status" value="1"/>
</dbReference>
<dbReference type="InterPro" id="IPR003593">
    <property type="entry name" value="AAA+_ATPase"/>
</dbReference>
<dbReference type="InterPro" id="IPR055190">
    <property type="entry name" value="ATP-synt_VA_C"/>
</dbReference>
<dbReference type="InterPro" id="IPR005722">
    <property type="entry name" value="ATP_synth_F1_bsu"/>
</dbReference>
<dbReference type="InterPro" id="IPR020003">
    <property type="entry name" value="ATPase_a/bsu_AS"/>
</dbReference>
<dbReference type="InterPro" id="IPR050053">
    <property type="entry name" value="ATPase_alpha/beta_chains"/>
</dbReference>
<dbReference type="InterPro" id="IPR004100">
    <property type="entry name" value="ATPase_F1/V1/A1_a/bsu_N"/>
</dbReference>
<dbReference type="InterPro" id="IPR036121">
    <property type="entry name" value="ATPase_F1/V1/A1_a/bsu_N_sf"/>
</dbReference>
<dbReference type="InterPro" id="IPR000194">
    <property type="entry name" value="ATPase_F1/V1/A1_a/bsu_nucl-bd"/>
</dbReference>
<dbReference type="InterPro" id="IPR024034">
    <property type="entry name" value="ATPase_F1/V1_b/a_C"/>
</dbReference>
<dbReference type="InterPro" id="IPR027417">
    <property type="entry name" value="P-loop_NTPase"/>
</dbReference>
<dbReference type="NCBIfam" id="TIGR01039">
    <property type="entry name" value="atpD"/>
    <property type="match status" value="1"/>
</dbReference>
<dbReference type="PANTHER" id="PTHR15184">
    <property type="entry name" value="ATP SYNTHASE"/>
    <property type="match status" value="1"/>
</dbReference>
<dbReference type="PANTHER" id="PTHR15184:SF71">
    <property type="entry name" value="ATP SYNTHASE SUBUNIT BETA, MITOCHONDRIAL"/>
    <property type="match status" value="1"/>
</dbReference>
<dbReference type="Pfam" id="PF00006">
    <property type="entry name" value="ATP-synt_ab"/>
    <property type="match status" value="1"/>
</dbReference>
<dbReference type="Pfam" id="PF02874">
    <property type="entry name" value="ATP-synt_ab_N"/>
    <property type="match status" value="1"/>
</dbReference>
<dbReference type="Pfam" id="PF22919">
    <property type="entry name" value="ATP-synt_VA_C"/>
    <property type="match status" value="1"/>
</dbReference>
<dbReference type="SMART" id="SM00382">
    <property type="entry name" value="AAA"/>
    <property type="match status" value="1"/>
</dbReference>
<dbReference type="SUPFAM" id="SSF47917">
    <property type="entry name" value="C-terminal domain of alpha and beta subunits of F1 ATP synthase"/>
    <property type="match status" value="1"/>
</dbReference>
<dbReference type="SUPFAM" id="SSF50615">
    <property type="entry name" value="N-terminal domain of alpha and beta subunits of F1 ATP synthase"/>
    <property type="match status" value="1"/>
</dbReference>
<dbReference type="SUPFAM" id="SSF52540">
    <property type="entry name" value="P-loop containing nucleoside triphosphate hydrolases"/>
    <property type="match status" value="1"/>
</dbReference>
<dbReference type="PROSITE" id="PS00152">
    <property type="entry name" value="ATPASE_ALPHA_BETA"/>
    <property type="match status" value="1"/>
</dbReference>
<reference key="1">
    <citation type="journal article" date="2005" name="Nat. Biotechnol.">
        <title>The complete genome sequence of the meat-borne lactic acid bacterium Lactobacillus sakei 23K.</title>
        <authorList>
            <person name="Chaillou S."/>
            <person name="Champomier-Verges M.-C."/>
            <person name="Cornet M."/>
            <person name="Crutz-Le Coq A.-M."/>
            <person name="Dudez A.-M."/>
            <person name="Martin V."/>
            <person name="Beaufils S."/>
            <person name="Darbon-Rongere E."/>
            <person name="Bossy R."/>
            <person name="Loux V."/>
            <person name="Zagorec M."/>
        </authorList>
    </citation>
    <scope>NUCLEOTIDE SEQUENCE [LARGE SCALE GENOMIC DNA]</scope>
    <source>
        <strain>23K</strain>
    </source>
</reference>
<sequence length="476" mass="51736">MSMGKVVQVIGPVVDVEFSLDTDLPDINNALTVDKGNDETVVLEVALELGDGVMRTISMESTDGLRRGMPVEDAGRAINVPVGKETLGRVFNVLGETIDGGEEFPADFRRDSIHRSAPKFEELNTSSEILETGIKVIDLLAPYVRGGKIGLFGGAGVGKTVLIQELIHNIAEEHGGISVFTGVGERTREGNDLYFEMKESGVLEKTAMVFGQMNESPGARMRVALTGLTIAEYFRDVEGQDVLLFIDNIFRFTQAGSEVSALLGRMPSAVGYQPTLATEMGQLQERITSTKKGSVTSIQAIYVPADDYTDPAPATTFAHLDATTNLDRKLTQQGIYPAVNPLESSSSALDPEIVGQEHYEVASEVQHVLQRYRELQDIISILGMDELSDDEKIIVARARRIQFFLSQNFHVAEAFTGQAGSYVPVKDTVSGFKAILAGDYDDVPEEAFRLVGNIDAALAKAKEMGYTQSEKAVDQD</sequence>
<evidence type="ECO:0000255" key="1">
    <source>
        <dbReference type="HAMAP-Rule" id="MF_01347"/>
    </source>
</evidence>
<evidence type="ECO:0000305" key="2"/>
<keyword id="KW-0066">ATP synthesis</keyword>
<keyword id="KW-0067">ATP-binding</keyword>
<keyword id="KW-1003">Cell membrane</keyword>
<keyword id="KW-0139">CF(1)</keyword>
<keyword id="KW-0375">Hydrogen ion transport</keyword>
<keyword id="KW-0406">Ion transport</keyword>
<keyword id="KW-0472">Membrane</keyword>
<keyword id="KW-0547">Nucleotide-binding</keyword>
<keyword id="KW-1185">Reference proteome</keyword>
<keyword id="KW-1278">Translocase</keyword>
<keyword id="KW-0813">Transport</keyword>